<accession>Q8TUS2</accession>
<reference key="1">
    <citation type="journal article" date="2002" name="Proc. Natl. Acad. Sci. U.S.A.">
        <title>The complete genome of hyperthermophile Methanopyrus kandleri AV19 and monophyly of archaeal methanogens.</title>
        <authorList>
            <person name="Slesarev A.I."/>
            <person name="Mezhevaya K.V."/>
            <person name="Makarova K.S."/>
            <person name="Polushin N.N."/>
            <person name="Shcherbinina O.V."/>
            <person name="Shakhova V.V."/>
            <person name="Belova G.I."/>
            <person name="Aravind L."/>
            <person name="Natale D.A."/>
            <person name="Rogozin I.B."/>
            <person name="Tatusov R.L."/>
            <person name="Wolf Y.I."/>
            <person name="Stetter K.O."/>
            <person name="Malykh A.G."/>
            <person name="Koonin E.V."/>
            <person name="Kozyavkin S.A."/>
        </authorList>
    </citation>
    <scope>NUCLEOTIDE SEQUENCE [LARGE SCALE GENOMIC DNA]</scope>
    <source>
        <strain>AV19 / DSM 6324 / JCM 9639 / NBRC 100938</strain>
    </source>
</reference>
<reference key="2">
    <citation type="journal article" date="2011" name="Proc. Natl. Acad. Sci. U.S.A.">
        <title>Archaeal 3'-phosphate RNA splicing ligase characterization identifies the missing component in tRNA maturation.</title>
        <authorList>
            <person name="Englert M."/>
            <person name="Sheppard K."/>
            <person name="Aslanian A."/>
            <person name="Yates J.R. III"/>
            <person name="Soll D."/>
        </authorList>
    </citation>
    <scope>IDENTIFICATION BY MASS SPECTROMETRY</scope>
    <scope>SUBUNIT</scope>
    <source>
        <strain>AV19 / DSM 6324 / JCM 9639 / NBRC 100938</strain>
    </source>
</reference>
<dbReference type="EC" id="6.5.1.8" evidence="1"/>
<dbReference type="EC" id="3.1.-.-"/>
<dbReference type="EMBL" id="AE009439">
    <property type="protein sequence ID" value="AAM02895.1"/>
    <property type="molecule type" value="Genomic_DNA"/>
</dbReference>
<dbReference type="SMR" id="Q8TUS2"/>
<dbReference type="FunCoup" id="Q8TUS2">
    <property type="interactions" value="104"/>
</dbReference>
<dbReference type="STRING" id="190192.MK1682"/>
<dbReference type="PaxDb" id="190192-MK1682"/>
<dbReference type="EnsemblBacteria" id="AAM02895">
    <property type="protein sequence ID" value="AAM02895"/>
    <property type="gene ID" value="MK1682"/>
</dbReference>
<dbReference type="KEGG" id="mka:MK1682"/>
<dbReference type="PATRIC" id="fig|190192.8.peg.1847"/>
<dbReference type="HOGENOM" id="CLU_012374_0_0_2"/>
<dbReference type="InParanoid" id="Q8TUS2"/>
<dbReference type="BRENDA" id="6.5.1.8">
    <property type="organism ID" value="3274"/>
</dbReference>
<dbReference type="Proteomes" id="UP000001826">
    <property type="component" value="Chromosome"/>
</dbReference>
<dbReference type="GO" id="GO:0003677">
    <property type="term" value="F:DNA binding"/>
    <property type="evidence" value="ECO:0007669"/>
    <property type="project" value="UniProtKB-KW"/>
</dbReference>
<dbReference type="GO" id="GO:0004519">
    <property type="term" value="F:endonuclease activity"/>
    <property type="evidence" value="ECO:0007669"/>
    <property type="project" value="UniProtKB-KW"/>
</dbReference>
<dbReference type="GO" id="GO:0005525">
    <property type="term" value="F:GTP binding"/>
    <property type="evidence" value="ECO:0007669"/>
    <property type="project" value="UniProtKB-KW"/>
</dbReference>
<dbReference type="GO" id="GO:0046872">
    <property type="term" value="F:metal ion binding"/>
    <property type="evidence" value="ECO:0007669"/>
    <property type="project" value="UniProtKB-KW"/>
</dbReference>
<dbReference type="GO" id="GO:0003972">
    <property type="term" value="F:RNA ligase (ATP) activity"/>
    <property type="evidence" value="ECO:0007669"/>
    <property type="project" value="TreeGrafter"/>
</dbReference>
<dbReference type="GO" id="GO:0170057">
    <property type="term" value="F:RNA ligase (GTP) activity"/>
    <property type="evidence" value="ECO:0007669"/>
    <property type="project" value="UniProtKB-EC"/>
</dbReference>
<dbReference type="GO" id="GO:0008452">
    <property type="term" value="F:RNA ligase activity"/>
    <property type="evidence" value="ECO:0000304"/>
    <property type="project" value="UniProtKB"/>
</dbReference>
<dbReference type="GO" id="GO:0016539">
    <property type="term" value="P:intein-mediated protein splicing"/>
    <property type="evidence" value="ECO:0007669"/>
    <property type="project" value="InterPro"/>
</dbReference>
<dbReference type="GO" id="GO:0006314">
    <property type="term" value="P:intron homing"/>
    <property type="evidence" value="ECO:0007669"/>
    <property type="project" value="UniProtKB-KW"/>
</dbReference>
<dbReference type="GO" id="GO:0006388">
    <property type="term" value="P:tRNA splicing, via endonucleolytic cleavage and ligation"/>
    <property type="evidence" value="ECO:0000304"/>
    <property type="project" value="UniProtKB"/>
</dbReference>
<dbReference type="CDD" id="cd00081">
    <property type="entry name" value="Hint"/>
    <property type="match status" value="1"/>
</dbReference>
<dbReference type="FunFam" id="3.10.28.10:FF:000020">
    <property type="entry name" value="tRNA-splicing ligase RtcB"/>
    <property type="match status" value="1"/>
</dbReference>
<dbReference type="FunFam" id="3.90.1860.10:FF:000010">
    <property type="entry name" value="tRNA-splicing ligase RtcB"/>
    <property type="match status" value="1"/>
</dbReference>
<dbReference type="FunFam" id="3.90.1860.10:FF:000001">
    <property type="entry name" value="tRNA-splicing ligase RtcB homolog"/>
    <property type="match status" value="1"/>
</dbReference>
<dbReference type="Gene3D" id="3.10.28.10">
    <property type="entry name" value="Homing endonucleases"/>
    <property type="match status" value="1"/>
</dbReference>
<dbReference type="Gene3D" id="3.90.1860.10">
    <property type="entry name" value="tRNA-splicing ligase RtcB"/>
    <property type="match status" value="2"/>
</dbReference>
<dbReference type="InterPro" id="IPR003586">
    <property type="entry name" value="Hint_dom_C"/>
</dbReference>
<dbReference type="InterPro" id="IPR003587">
    <property type="entry name" value="Hint_dom_N"/>
</dbReference>
<dbReference type="InterPro" id="IPR036844">
    <property type="entry name" value="Hint_dom_sf"/>
</dbReference>
<dbReference type="InterPro" id="IPR027434">
    <property type="entry name" value="Homing_endonucl"/>
</dbReference>
<dbReference type="InterPro" id="IPR006142">
    <property type="entry name" value="INTEIN"/>
</dbReference>
<dbReference type="InterPro" id="IPR030934">
    <property type="entry name" value="Intein_C"/>
</dbReference>
<dbReference type="InterPro" id="IPR004042">
    <property type="entry name" value="Intein_endonuc_central"/>
</dbReference>
<dbReference type="InterPro" id="IPR006141">
    <property type="entry name" value="Intein_N"/>
</dbReference>
<dbReference type="InterPro" id="IPR004860">
    <property type="entry name" value="LAGLIDADG_dom"/>
</dbReference>
<dbReference type="InterPro" id="IPR001233">
    <property type="entry name" value="RtcB"/>
</dbReference>
<dbReference type="InterPro" id="IPR036025">
    <property type="entry name" value="RtcB-like_sf"/>
</dbReference>
<dbReference type="InterPro" id="IPR053454">
    <property type="entry name" value="RtcB_ligase"/>
</dbReference>
<dbReference type="NCBIfam" id="TIGR01443">
    <property type="entry name" value="intein_Cterm"/>
    <property type="match status" value="1"/>
</dbReference>
<dbReference type="NCBIfam" id="TIGR01445">
    <property type="entry name" value="intein_Nterm"/>
    <property type="match status" value="1"/>
</dbReference>
<dbReference type="NCBIfam" id="NF038162">
    <property type="entry name" value="RctB_rel_intein"/>
    <property type="match status" value="1"/>
</dbReference>
<dbReference type="PANTHER" id="PTHR11118">
    <property type="entry name" value="RNA-SPLICING LIGASE RTCB HOMOLOG"/>
    <property type="match status" value="1"/>
</dbReference>
<dbReference type="PANTHER" id="PTHR11118:SF1">
    <property type="entry name" value="RNA-SPLICING LIGASE RTCB HOMOLOG"/>
    <property type="match status" value="1"/>
</dbReference>
<dbReference type="Pfam" id="PF14890">
    <property type="entry name" value="Intein_splicing"/>
    <property type="match status" value="1"/>
</dbReference>
<dbReference type="Pfam" id="PF14528">
    <property type="entry name" value="LAGLIDADG_3"/>
    <property type="match status" value="1"/>
</dbReference>
<dbReference type="Pfam" id="PF01139">
    <property type="entry name" value="RtcB"/>
    <property type="match status" value="2"/>
</dbReference>
<dbReference type="PRINTS" id="PR00379">
    <property type="entry name" value="INTEIN"/>
</dbReference>
<dbReference type="SMART" id="SM00305">
    <property type="entry name" value="HintC"/>
    <property type="match status" value="1"/>
</dbReference>
<dbReference type="SMART" id="SM00306">
    <property type="entry name" value="HintN"/>
    <property type="match status" value="1"/>
</dbReference>
<dbReference type="SUPFAM" id="SSF51294">
    <property type="entry name" value="Hedgehog/intein (Hint) domain"/>
    <property type="match status" value="1"/>
</dbReference>
<dbReference type="SUPFAM" id="SSF55608">
    <property type="entry name" value="Homing endonucleases"/>
    <property type="match status" value="1"/>
</dbReference>
<dbReference type="SUPFAM" id="SSF103365">
    <property type="entry name" value="Hypothetical protein PH1602"/>
    <property type="match status" value="2"/>
</dbReference>
<dbReference type="PROSITE" id="PS50818">
    <property type="entry name" value="INTEIN_C_TER"/>
    <property type="match status" value="1"/>
</dbReference>
<dbReference type="PROSITE" id="PS50819">
    <property type="entry name" value="INTEIN_ENDONUCLEASE"/>
    <property type="match status" value="1"/>
</dbReference>
<dbReference type="PROSITE" id="PS50817">
    <property type="entry name" value="INTEIN_N_TER"/>
    <property type="match status" value="1"/>
</dbReference>
<dbReference type="PROSITE" id="PS01288">
    <property type="entry name" value="UPF0027"/>
    <property type="match status" value="1"/>
</dbReference>
<evidence type="ECO:0000250" key="1">
    <source>
        <dbReference type="UniProtKB" id="O59245"/>
    </source>
</evidence>
<evidence type="ECO:0000255" key="2"/>
<evidence type="ECO:0000255" key="3">
    <source>
        <dbReference type="PROSITE-ProRule" id="PRU00273"/>
    </source>
</evidence>
<evidence type="ECO:0000269" key="4">
    <source>
    </source>
</evidence>
<evidence type="ECO:0000305" key="5"/>
<keyword id="KW-0068">Autocatalytic cleavage</keyword>
<keyword id="KW-0238">DNA-binding</keyword>
<keyword id="KW-0255">Endonuclease</keyword>
<keyword id="KW-0342">GTP-binding</keyword>
<keyword id="KW-0378">Hydrolase</keyword>
<keyword id="KW-0404">Intron homing</keyword>
<keyword id="KW-0436">Ligase</keyword>
<keyword id="KW-0464">Manganese</keyword>
<keyword id="KW-0479">Metal-binding</keyword>
<keyword id="KW-0540">Nuclease</keyword>
<keyword id="KW-0547">Nucleotide-binding</keyword>
<keyword id="KW-0651">Protein splicing</keyword>
<keyword id="KW-1185">Reference proteome</keyword>
<keyword id="KW-0819">tRNA processing</keyword>
<comment type="function">
    <text evidence="1">Essential for tRNA splicing and maturation. Acts by directly joining spliced tRNA halves to mature-sized tRNAs. Joins RNA with 2',3'-cyclic-phosphate or 3'-phosphate ends to RNA with 5'-hydroxy ends.</text>
</comment>
<comment type="catalytic activity">
    <reaction evidence="1">
        <text>a 3'-end 3'-phospho-ribonucleotide-RNA + a 5'-end dephospho-ribonucleoside-RNA + GTP = a ribonucleotidyl-ribonucleotide-RNA + GMP + diphosphate</text>
        <dbReference type="Rhea" id="RHEA:68076"/>
        <dbReference type="Rhea" id="RHEA-COMP:10463"/>
        <dbReference type="Rhea" id="RHEA-COMP:13936"/>
        <dbReference type="Rhea" id="RHEA-COMP:17355"/>
        <dbReference type="ChEBI" id="CHEBI:33019"/>
        <dbReference type="ChEBI" id="CHEBI:37565"/>
        <dbReference type="ChEBI" id="CHEBI:58115"/>
        <dbReference type="ChEBI" id="CHEBI:83062"/>
        <dbReference type="ChEBI" id="CHEBI:138284"/>
        <dbReference type="ChEBI" id="CHEBI:173118"/>
        <dbReference type="EC" id="6.5.1.8"/>
    </reaction>
</comment>
<comment type="catalytic activity">
    <reaction evidence="1">
        <text>a 3'-end 2',3'-cyclophospho-ribonucleotide-RNA + a 5'-end dephospho-ribonucleoside-RNA + GTP + H2O = a ribonucleotidyl-ribonucleotide-RNA + GMP + diphosphate + H(+)</text>
        <dbReference type="Rhea" id="RHEA:68080"/>
        <dbReference type="Rhea" id="RHEA-COMP:10464"/>
        <dbReference type="Rhea" id="RHEA-COMP:13936"/>
        <dbReference type="Rhea" id="RHEA-COMP:17355"/>
        <dbReference type="ChEBI" id="CHEBI:15377"/>
        <dbReference type="ChEBI" id="CHEBI:15378"/>
        <dbReference type="ChEBI" id="CHEBI:33019"/>
        <dbReference type="ChEBI" id="CHEBI:37565"/>
        <dbReference type="ChEBI" id="CHEBI:58115"/>
        <dbReference type="ChEBI" id="CHEBI:83064"/>
        <dbReference type="ChEBI" id="CHEBI:138284"/>
        <dbReference type="ChEBI" id="CHEBI:173118"/>
        <dbReference type="EC" id="6.5.1.8"/>
    </reaction>
</comment>
<comment type="cofactor">
    <cofactor evidence="1">
        <name>Mn(2+)</name>
        <dbReference type="ChEBI" id="CHEBI:29035"/>
    </cofactor>
    <text evidence="1">Binds 2 manganese ions per subunit.</text>
</comment>
<comment type="subunit">
    <text evidence="4">Monomer.</text>
</comment>
<comment type="PTM">
    <text evidence="5">This protein undergoes a protein self splicing that involves a post-translational excision of the intervening region (intein) followed by peptide ligation.</text>
</comment>
<comment type="miscellaneous">
    <text evidence="1">Ligation proceeds through 3 nucleotidyl transfer steps, with 2',3'-cyclic phosphate termini being hydrolyzed to 3'-P termini in a step that precedes 3'-P activation with GMP. In the first nucleotidyl transfer step, RtcB reacts with GTP to form a covalent RtcB-histidine-GMP intermediate with release of PPi; in the second step, the GMP moiety is transferred to the RNA 3'-P; in the third step, the 5'-OH from the opposite RNA strand attacks the activated 3'-P to form a 3',5'-phosphodiester bond and release GMP.</text>
</comment>
<comment type="similarity">
    <text evidence="5">Belongs to the RtcB family.</text>
</comment>
<proteinExistence type="evidence at protein level"/>
<protein>
    <recommendedName>
        <fullName evidence="1">tRNA-splicing ligase RtcB</fullName>
        <ecNumber evidence="1">6.5.1.8</ecNumber>
    </recommendedName>
    <alternativeName>
        <fullName evidence="1">3'-phosphate/5'-hydroxy nucleic acid ligase</fullName>
    </alternativeName>
    <component>
        <recommendedName>
            <fullName>Mka hyp2 intein</fullName>
            <ecNumber>3.1.-.-</ecNumber>
        </recommendedName>
    </component>
</protein>
<organism>
    <name type="scientific">Methanopyrus kandleri (strain AV19 / DSM 6324 / JCM 9639 / NBRC 100938)</name>
    <dbReference type="NCBI Taxonomy" id="190192"/>
    <lineage>
        <taxon>Archaea</taxon>
        <taxon>Methanobacteriati</taxon>
        <taxon>Methanobacteriota</taxon>
        <taxon>Methanomada group</taxon>
        <taxon>Methanopyri</taxon>
        <taxon>Methanopyrales</taxon>
        <taxon>Methanopyraceae</taxon>
        <taxon>Methanopyrus</taxon>
    </lineage>
</organism>
<gene>
    <name type="primary">rtcB</name>
    <name type="ordered locus">MK1682</name>
</gene>
<feature type="chain" id="PRO_0000232526" description="tRNA-splicing ligase RtcB, 1st part" evidence="2">
    <location>
        <begin position="1"/>
        <end position="100"/>
    </location>
</feature>
<feature type="chain" id="PRO_0000232527" description="Mka hyp2 intein" evidence="2">
    <location>
        <begin position="101"/>
        <end position="582"/>
    </location>
</feature>
<feature type="chain" id="PRO_0000232528" description="tRNA-splicing ligase RtcB, 2nd part" evidence="2">
    <location>
        <begin position="583"/>
        <end position="988"/>
    </location>
</feature>
<feature type="domain" description="DOD-type homing endonuclease" evidence="3">
    <location>
        <begin position="251"/>
        <end position="415"/>
    </location>
</feature>
<feature type="active site" description="GMP-histidine intermediate" evidence="1">
    <location>
        <position position="911"/>
    </location>
</feature>
<feature type="binding site" evidence="1">
    <location>
        <position position="98"/>
    </location>
    <ligand>
        <name>Mn(2+)</name>
        <dbReference type="ChEBI" id="CHEBI:29035"/>
        <label>1</label>
    </ligand>
</feature>
<feature type="binding site" evidence="1">
    <location>
        <position position="583"/>
    </location>
    <ligand>
        <name>Mn(2+)</name>
        <dbReference type="ChEBI" id="CHEBI:29035"/>
        <label>1</label>
    </ligand>
</feature>
<feature type="binding site" evidence="1">
    <location>
        <position position="583"/>
    </location>
    <ligand>
        <name>Mn(2+)</name>
        <dbReference type="ChEBI" id="CHEBI:29035"/>
        <label>2</label>
    </ligand>
</feature>
<feature type="binding site" evidence="1">
    <location>
        <begin position="699"/>
        <end position="703"/>
    </location>
    <ligand>
        <name>GMP</name>
        <dbReference type="ChEBI" id="CHEBI:58115"/>
    </ligand>
</feature>
<feature type="binding site" evidence="1">
    <location>
        <position position="700"/>
    </location>
    <ligand>
        <name>Mn(2+)</name>
        <dbReference type="ChEBI" id="CHEBI:29035"/>
        <label>1</label>
    </ligand>
</feature>
<feature type="binding site" evidence="1">
    <location>
        <position position="732"/>
    </location>
    <ligand>
        <name>Mn(2+)</name>
        <dbReference type="ChEBI" id="CHEBI:29035"/>
        <label>2</label>
    </ligand>
</feature>
<feature type="binding site" evidence="1">
    <location>
        <begin position="833"/>
        <end position="834"/>
    </location>
    <ligand>
        <name>GMP</name>
        <dbReference type="ChEBI" id="CHEBI:58115"/>
    </ligand>
</feature>
<feature type="binding site" evidence="1">
    <location>
        <position position="833"/>
    </location>
    <ligand>
        <name>Mn(2+)</name>
        <dbReference type="ChEBI" id="CHEBI:29035"/>
        <label>2</label>
    </ligand>
</feature>
<feature type="binding site" evidence="1">
    <location>
        <begin position="885"/>
        <end position="888"/>
    </location>
    <ligand>
        <name>GMP</name>
        <dbReference type="ChEBI" id="CHEBI:58115"/>
    </ligand>
</feature>
<feature type="binding site" evidence="1">
    <location>
        <position position="892"/>
    </location>
    <ligand>
        <name>GMP</name>
        <dbReference type="ChEBI" id="CHEBI:58115"/>
    </ligand>
</feature>
<feature type="binding site" evidence="1">
    <location>
        <begin position="911"/>
        <end position="914"/>
    </location>
    <ligand>
        <name>GMP</name>
        <dbReference type="ChEBI" id="CHEBI:58115"/>
    </ligand>
</feature>
<feature type="binding site" evidence="1">
    <location>
        <position position="987"/>
    </location>
    <ligand>
        <name>GMP</name>
        <dbReference type="ChEBI" id="CHEBI:58115"/>
    </ligand>
</feature>
<name>RTCB_METKA</name>
<sequence>MAPKSMLKHIRNNVVWELPEDYKGCMKVPGRIYATEKLIDGMEKGVFDQVANVACLPGIYGYSIALPDAHYGYGFPIGGVAAFDVEEGVVSPGGVGYDINCLAPGTKILTEHGCWVKVEDLPKMLTDQKLKVYDVDEGREDDSEIKFVMERGIEEDERAVVLVTESGLTIEGSEDHPVLTPEGYVELGEIEEGDLVVVYPFEGVEYEEKEGTILDESDFEDVDPQVLRYLEERDLIPLRWSDPKVGTLARILGFAMGDGHLGEQAGRLTLSFYGDERTLRELKRDLESLGVKANLHVRKRRYEIETASGRYEGEATSVELRVASRSFALLMEKLGMPRGRKVETPYKVPDWIKEAPLWVKRNFLAGLFAADGSVVKFKRYTPLPINLTQAKVEELEENLREFMNDVAKLLREFGIETTLYEVKSKKNVVYKLAIVGEENIKRFLGKVGYEYDPEKKVEGLAAYAYLKLKERVKKDRKEAAETAAEVYEETGSITKAHEAVADVVNRRFVERVVYDGGISSVRVPEDFPTFERFKEERVLAGGFVIEEVVEVKGVEPEYDRFYDIGVCHGAHNFIADGVVVHNCGVRVMKTDLTEDDVRPKLRELLETIFRNVPAGLGSRHRRVRLSTQELRQVMLYGAEWAVEEGFGFDEDLDHIESRGNMTHAYETIGWEEYGPRDDVASKRAIERGRPQLGTLGSGNHFLEVQVVDEIYDKEAAEKMGIREEGQVTIMVHTGSRGFGHQVCSDHLRIMERSMRDVERRFGVRIPDRQLACAAMGTDEAKRYFNAMNAAANYAFANRQMISHWTRESFVEVFGDEYGDADDMGIEVIYDIAHNMAKIEKHPVDGEERWLVVHRKGATRAFSEEALKKHGEPVPFEGLPQPVLIPGDMGTGSYILIGTEKAMEETWGSTCHGAGRTMSRAAAKRKFWGEDVARELERQGILVKAASMPVVAEEAPPAYKDVDEVVRAVAEAGISDPVVRLRPIGVVKG</sequence>